<feature type="chain" id="PRO_1000122084" description="Exodeoxyribonuclease 7 large subunit">
    <location>
        <begin position="1"/>
        <end position="449"/>
    </location>
</feature>
<organism>
    <name type="scientific">Salmonella heidelberg (strain SL476)</name>
    <dbReference type="NCBI Taxonomy" id="454169"/>
    <lineage>
        <taxon>Bacteria</taxon>
        <taxon>Pseudomonadati</taxon>
        <taxon>Pseudomonadota</taxon>
        <taxon>Gammaproteobacteria</taxon>
        <taxon>Enterobacterales</taxon>
        <taxon>Enterobacteriaceae</taxon>
        <taxon>Salmonella</taxon>
    </lineage>
</organism>
<reference key="1">
    <citation type="journal article" date="2011" name="J. Bacteriol.">
        <title>Comparative genomics of 28 Salmonella enterica isolates: evidence for CRISPR-mediated adaptive sublineage evolution.</title>
        <authorList>
            <person name="Fricke W.F."/>
            <person name="Mammel M.K."/>
            <person name="McDermott P.F."/>
            <person name="Tartera C."/>
            <person name="White D.G."/>
            <person name="Leclerc J.E."/>
            <person name="Ravel J."/>
            <person name="Cebula T.A."/>
        </authorList>
    </citation>
    <scope>NUCLEOTIDE SEQUENCE [LARGE SCALE GENOMIC DNA]</scope>
    <source>
        <strain>SL476</strain>
    </source>
</reference>
<name>EX7L_SALHS</name>
<evidence type="ECO:0000255" key="1">
    <source>
        <dbReference type="HAMAP-Rule" id="MF_00378"/>
    </source>
</evidence>
<comment type="function">
    <text evidence="1">Bidirectionally degrades single-stranded DNA into large acid-insoluble oligonucleotides, which are then degraded further into small acid-soluble oligonucleotides.</text>
</comment>
<comment type="catalytic activity">
    <reaction evidence="1">
        <text>Exonucleolytic cleavage in either 5'- to 3'- or 3'- to 5'-direction to yield nucleoside 5'-phosphates.</text>
        <dbReference type="EC" id="3.1.11.6"/>
    </reaction>
</comment>
<comment type="subunit">
    <text evidence="1">Heterooligomer composed of large and small subunits.</text>
</comment>
<comment type="subcellular location">
    <subcellularLocation>
        <location evidence="1">Cytoplasm</location>
    </subcellularLocation>
</comment>
<comment type="similarity">
    <text evidence="1">Belongs to the XseA family.</text>
</comment>
<accession>B4TD84</accession>
<sequence length="449" mass="50676">MLSSQTSSIFTVSRLNQTVRLLLEQEMGQVWISGEISNFTQPASGHWYFTLKDDTAQVRCAMFRNSNRRVTFRPQHGQQVLVRANITLYEPRGDYQIIAESMQPAGEGLLQQKYEQLKAKLHAEGLFDQQHKQPLPSPAHCVGVITSKTGAALHDILHVLKRRDPSLPVIIYPTAVQGDDAPGQIVRAIELANARGECDVLIVGRGGGSLEDLWSFNDERVARAIFASRIPVVSAVGHETDVTIADFVADLRAPTPSAAAEIVSRNQQELLRQIQSAQQRLGMAMDYYLANRSRRFTQIFHRLQQQHPQLRLARQQTALERLRQRMGFALEARIKQANQRQQRVSQRLSQQNPQPRIHRAQSRIQQLEYRLTENIRSRLSEQRERFGNAVTHLEAVSPLATLARGYTVSTTTDGKVLKKIKQVKAGDIMTTRLEDGWLESEVKSVTPGT</sequence>
<dbReference type="EC" id="3.1.11.6" evidence="1"/>
<dbReference type="EMBL" id="CP001120">
    <property type="protein sequence ID" value="ACF66240.1"/>
    <property type="molecule type" value="Genomic_DNA"/>
</dbReference>
<dbReference type="RefSeq" id="WP_000953155.1">
    <property type="nucleotide sequence ID" value="NC_011083.1"/>
</dbReference>
<dbReference type="SMR" id="B4TD84"/>
<dbReference type="KEGG" id="seh:SeHA_C2768"/>
<dbReference type="HOGENOM" id="CLU_023625_3_1_6"/>
<dbReference type="Proteomes" id="UP000001866">
    <property type="component" value="Chromosome"/>
</dbReference>
<dbReference type="GO" id="GO:0005737">
    <property type="term" value="C:cytoplasm"/>
    <property type="evidence" value="ECO:0007669"/>
    <property type="project" value="UniProtKB-SubCell"/>
</dbReference>
<dbReference type="GO" id="GO:0009318">
    <property type="term" value="C:exodeoxyribonuclease VII complex"/>
    <property type="evidence" value="ECO:0007669"/>
    <property type="project" value="InterPro"/>
</dbReference>
<dbReference type="GO" id="GO:0008855">
    <property type="term" value="F:exodeoxyribonuclease VII activity"/>
    <property type="evidence" value="ECO:0007669"/>
    <property type="project" value="UniProtKB-UniRule"/>
</dbReference>
<dbReference type="GO" id="GO:0003676">
    <property type="term" value="F:nucleic acid binding"/>
    <property type="evidence" value="ECO:0007669"/>
    <property type="project" value="InterPro"/>
</dbReference>
<dbReference type="GO" id="GO:0006308">
    <property type="term" value="P:DNA catabolic process"/>
    <property type="evidence" value="ECO:0007669"/>
    <property type="project" value="UniProtKB-UniRule"/>
</dbReference>
<dbReference type="CDD" id="cd04489">
    <property type="entry name" value="ExoVII_LU_OBF"/>
    <property type="match status" value="1"/>
</dbReference>
<dbReference type="HAMAP" id="MF_00378">
    <property type="entry name" value="Exonuc_7_L"/>
    <property type="match status" value="1"/>
</dbReference>
<dbReference type="InterPro" id="IPR003753">
    <property type="entry name" value="Exonuc_VII_L"/>
</dbReference>
<dbReference type="InterPro" id="IPR020579">
    <property type="entry name" value="Exonuc_VII_lsu_C"/>
</dbReference>
<dbReference type="InterPro" id="IPR025824">
    <property type="entry name" value="OB-fold_nuc-bd_dom"/>
</dbReference>
<dbReference type="NCBIfam" id="TIGR00237">
    <property type="entry name" value="xseA"/>
    <property type="match status" value="1"/>
</dbReference>
<dbReference type="PANTHER" id="PTHR30008">
    <property type="entry name" value="EXODEOXYRIBONUCLEASE 7 LARGE SUBUNIT"/>
    <property type="match status" value="1"/>
</dbReference>
<dbReference type="PANTHER" id="PTHR30008:SF0">
    <property type="entry name" value="EXODEOXYRIBONUCLEASE 7 LARGE SUBUNIT"/>
    <property type="match status" value="1"/>
</dbReference>
<dbReference type="Pfam" id="PF02601">
    <property type="entry name" value="Exonuc_VII_L"/>
    <property type="match status" value="1"/>
</dbReference>
<dbReference type="Pfam" id="PF13742">
    <property type="entry name" value="tRNA_anti_2"/>
    <property type="match status" value="1"/>
</dbReference>
<gene>
    <name evidence="1" type="primary">xseA</name>
    <name type="ordered locus">SeHA_C2768</name>
</gene>
<keyword id="KW-0963">Cytoplasm</keyword>
<keyword id="KW-0269">Exonuclease</keyword>
<keyword id="KW-0378">Hydrolase</keyword>
<keyword id="KW-0540">Nuclease</keyword>
<protein>
    <recommendedName>
        <fullName evidence="1">Exodeoxyribonuclease 7 large subunit</fullName>
        <ecNumber evidence="1">3.1.11.6</ecNumber>
    </recommendedName>
    <alternativeName>
        <fullName evidence="1">Exodeoxyribonuclease VII large subunit</fullName>
        <shortName evidence="1">Exonuclease VII large subunit</shortName>
    </alternativeName>
</protein>
<proteinExistence type="inferred from homology"/>